<protein>
    <recommendedName>
        <fullName evidence="2">Large ribosomal subunit protein uL22c</fullName>
    </recommendedName>
    <alternativeName>
        <fullName>50S ribosomal protein L22, chloroplastic</fullName>
    </alternativeName>
</protein>
<geneLocation type="chloroplast"/>
<feature type="chain" id="PRO_0000125310" description="Large ribosomal subunit protein uL22c">
    <location>
        <begin position="1"/>
        <end position="119"/>
    </location>
</feature>
<proteinExistence type="inferred from homology"/>
<sequence>MNMTRDADLKVKAVARGVFMSPQKVRRVLDQIRGRSYEEALMILQFMPYRACEPISKVLYSAAANAKNNLGLTKASLSISEAKVDKGPILKRFRPRAQGRGFPIRKPTCQISITVQSIK</sequence>
<keyword id="KW-0150">Chloroplast</keyword>
<keyword id="KW-0934">Plastid</keyword>
<keyword id="KW-0687">Ribonucleoprotein</keyword>
<keyword id="KW-0689">Ribosomal protein</keyword>
<keyword id="KW-0694">RNA-binding</keyword>
<keyword id="KW-0699">rRNA-binding</keyword>
<organism>
    <name type="scientific">Mesostigma viride</name>
    <name type="common">Green alga</name>
    <dbReference type="NCBI Taxonomy" id="41882"/>
    <lineage>
        <taxon>Eukaryota</taxon>
        <taxon>Viridiplantae</taxon>
        <taxon>Streptophyta</taxon>
        <taxon>Mesostigmatophyceae</taxon>
        <taxon>Mesostigmatales</taxon>
        <taxon>Mesostigmataceae</taxon>
        <taxon>Mesostigma</taxon>
    </lineage>
</organism>
<dbReference type="EMBL" id="AF166114">
    <property type="protein sequence ID" value="AAF43810.1"/>
    <property type="molecule type" value="Genomic_DNA"/>
</dbReference>
<dbReference type="RefSeq" id="NP_038369.1">
    <property type="nucleotide sequence ID" value="NC_002186.1"/>
</dbReference>
<dbReference type="SMR" id="Q9MUU1"/>
<dbReference type="GeneID" id="800969"/>
<dbReference type="GO" id="GO:0009507">
    <property type="term" value="C:chloroplast"/>
    <property type="evidence" value="ECO:0007669"/>
    <property type="project" value="UniProtKB-SubCell"/>
</dbReference>
<dbReference type="GO" id="GO:0015934">
    <property type="term" value="C:large ribosomal subunit"/>
    <property type="evidence" value="ECO:0007669"/>
    <property type="project" value="InterPro"/>
</dbReference>
<dbReference type="GO" id="GO:0019843">
    <property type="term" value="F:rRNA binding"/>
    <property type="evidence" value="ECO:0007669"/>
    <property type="project" value="UniProtKB-UniRule"/>
</dbReference>
<dbReference type="GO" id="GO:0003735">
    <property type="term" value="F:structural constituent of ribosome"/>
    <property type="evidence" value="ECO:0007669"/>
    <property type="project" value="InterPro"/>
</dbReference>
<dbReference type="GO" id="GO:0006412">
    <property type="term" value="P:translation"/>
    <property type="evidence" value="ECO:0007669"/>
    <property type="project" value="UniProtKB-UniRule"/>
</dbReference>
<dbReference type="CDD" id="cd00336">
    <property type="entry name" value="Ribosomal_L22"/>
    <property type="match status" value="1"/>
</dbReference>
<dbReference type="Gene3D" id="3.90.470.10">
    <property type="entry name" value="Ribosomal protein L22/L17"/>
    <property type="match status" value="1"/>
</dbReference>
<dbReference type="HAMAP" id="MF_01331_B">
    <property type="entry name" value="Ribosomal_uL22_B"/>
    <property type="match status" value="1"/>
</dbReference>
<dbReference type="InterPro" id="IPR001063">
    <property type="entry name" value="Ribosomal_uL22"/>
</dbReference>
<dbReference type="InterPro" id="IPR005727">
    <property type="entry name" value="Ribosomal_uL22_bac/chlpt-type"/>
</dbReference>
<dbReference type="InterPro" id="IPR047867">
    <property type="entry name" value="Ribosomal_uL22_bac/org-type"/>
</dbReference>
<dbReference type="InterPro" id="IPR036394">
    <property type="entry name" value="Ribosomal_uL22_sf"/>
</dbReference>
<dbReference type="NCBIfam" id="TIGR01044">
    <property type="entry name" value="rplV_bact"/>
    <property type="match status" value="1"/>
</dbReference>
<dbReference type="PANTHER" id="PTHR13501">
    <property type="entry name" value="CHLOROPLAST 50S RIBOSOMAL PROTEIN L22-RELATED"/>
    <property type="match status" value="1"/>
</dbReference>
<dbReference type="PANTHER" id="PTHR13501:SF10">
    <property type="entry name" value="LARGE RIBOSOMAL SUBUNIT PROTEIN UL22M"/>
    <property type="match status" value="1"/>
</dbReference>
<dbReference type="Pfam" id="PF00237">
    <property type="entry name" value="Ribosomal_L22"/>
    <property type="match status" value="1"/>
</dbReference>
<dbReference type="SUPFAM" id="SSF54843">
    <property type="entry name" value="Ribosomal protein L22"/>
    <property type="match status" value="1"/>
</dbReference>
<comment type="function">
    <text evidence="1">This protein binds specifically to 23S rRNA.</text>
</comment>
<comment type="function">
    <text evidence="1">The globular domain of the protein is located near the polypeptide exit tunnel on the outside of the subunit, while an extended beta-hairpin is found that lines the wall of the exit tunnel in the center of the 70S ribosome.</text>
</comment>
<comment type="subunit">
    <text evidence="1">Part of the 50S ribosomal subunit.</text>
</comment>
<comment type="subcellular location">
    <subcellularLocation>
        <location>Plastid</location>
        <location>Chloroplast</location>
    </subcellularLocation>
</comment>
<comment type="similarity">
    <text evidence="2">Belongs to the universal ribosomal protein uL22 family.</text>
</comment>
<evidence type="ECO:0000250" key="1"/>
<evidence type="ECO:0000305" key="2"/>
<accession>Q9MUU1</accession>
<name>RK22_MESVI</name>
<gene>
    <name type="primary">rpl22</name>
</gene>
<reference key="1">
    <citation type="journal article" date="2000" name="Nature">
        <title>Ancestral chloroplast genome in Mesostigma viride reveals an early branch of green plant evolution.</title>
        <authorList>
            <person name="Lemieux C."/>
            <person name="Otis C."/>
            <person name="Turmel M."/>
        </authorList>
    </citation>
    <scope>NUCLEOTIDE SEQUENCE [LARGE SCALE GENOMIC DNA]</scope>
    <source>
        <strain>NIES-296 / KY-14 / CCMP 2046</strain>
    </source>
</reference>